<proteinExistence type="inferred from homology"/>
<protein>
    <recommendedName>
        <fullName evidence="1">Alpha-1,4-glucan:maltose-1-phosphate maltosyltransferase</fullName>
        <shortName evidence="1">GMPMT</shortName>
        <ecNumber evidence="1">2.4.99.16</ecNumber>
    </recommendedName>
    <alternativeName>
        <fullName evidence="1">(1-&gt;4)-alpha-D-glucan:maltose-1-phosphate alpha-D-maltosyltransferase</fullName>
    </alternativeName>
</protein>
<organism>
    <name type="scientific">Cereibacter sphaeroides (strain ATCC 17023 / DSM 158 / JCM 6121 / CCUG 31486 / LMG 2827 / NBRC 12203 / NCIMB 8253 / ATH 2.4.1.)</name>
    <name type="common">Rhodobacter sphaeroides</name>
    <dbReference type="NCBI Taxonomy" id="272943"/>
    <lineage>
        <taxon>Bacteria</taxon>
        <taxon>Pseudomonadati</taxon>
        <taxon>Pseudomonadota</taxon>
        <taxon>Alphaproteobacteria</taxon>
        <taxon>Rhodobacterales</taxon>
        <taxon>Paracoccaceae</taxon>
        <taxon>Cereibacter</taxon>
    </lineage>
</organism>
<reference key="1">
    <citation type="submission" date="2005-09" db="EMBL/GenBank/DDBJ databases">
        <title>Complete sequence of chromosome 1 of Rhodobacter sphaeroides 2.4.1.</title>
        <authorList>
            <person name="Copeland A."/>
            <person name="Lucas S."/>
            <person name="Lapidus A."/>
            <person name="Barry K."/>
            <person name="Detter J.C."/>
            <person name="Glavina T."/>
            <person name="Hammon N."/>
            <person name="Israni S."/>
            <person name="Pitluck S."/>
            <person name="Richardson P."/>
            <person name="Mackenzie C."/>
            <person name="Choudhary M."/>
            <person name="Larimer F."/>
            <person name="Hauser L.J."/>
            <person name="Land M."/>
            <person name="Donohue T.J."/>
            <person name="Kaplan S."/>
        </authorList>
    </citation>
    <scope>NUCLEOTIDE SEQUENCE [LARGE SCALE GENOMIC DNA]</scope>
    <source>
        <strain>ATCC 17023 / DSM 158 / JCM 6121 / CCUG 31486 / LMG 2827 / NBRC 12203 / NCIMB 8253 / ATH 2.4.1.</strain>
    </source>
</reference>
<feature type="chain" id="PRO_0000413902" description="Alpha-1,4-glucan:maltose-1-phosphate maltosyltransferase">
    <location>
        <begin position="1"/>
        <end position="668"/>
    </location>
</feature>
<feature type="region of interest" description="Disordered" evidence="2">
    <location>
        <begin position="263"/>
        <end position="288"/>
    </location>
</feature>
<feature type="active site" description="Nucleophile" evidence="1">
    <location>
        <position position="395"/>
    </location>
</feature>
<feature type="active site" description="Proton donor" evidence="1">
    <location>
        <position position="424"/>
    </location>
</feature>
<feature type="binding site" evidence="1">
    <location>
        <position position="264"/>
    </location>
    <ligand>
        <name>alpha-maltose 1-phosphate</name>
        <dbReference type="ChEBI" id="CHEBI:63576"/>
    </ligand>
</feature>
<feature type="binding site" evidence="1">
    <location>
        <position position="324"/>
    </location>
    <ligand>
        <name>alpha-maltose 1-phosphate</name>
        <dbReference type="ChEBI" id="CHEBI:63576"/>
    </ligand>
</feature>
<feature type="binding site" evidence="1">
    <location>
        <position position="359"/>
    </location>
    <ligand>
        <name>alpha-maltose 1-phosphate</name>
        <dbReference type="ChEBI" id="CHEBI:63576"/>
    </ligand>
</feature>
<feature type="binding site" evidence="1">
    <location>
        <position position="396"/>
    </location>
    <ligand>
        <name>alpha-maltose 1-phosphate</name>
        <dbReference type="ChEBI" id="CHEBI:63576"/>
    </ligand>
</feature>
<feature type="binding site" evidence="1">
    <location>
        <begin position="535"/>
        <end position="536"/>
    </location>
    <ligand>
        <name>alpha-maltose 1-phosphate</name>
        <dbReference type="ChEBI" id="CHEBI:63576"/>
    </ligand>
</feature>
<feature type="site" description="Transition state stabilizer" evidence="1">
    <location>
        <position position="482"/>
    </location>
</feature>
<dbReference type="EC" id="2.4.99.16" evidence="1"/>
<dbReference type="EMBL" id="CP000143">
    <property type="protein sequence ID" value="ABA78606.2"/>
    <property type="molecule type" value="Genomic_DNA"/>
</dbReference>
<dbReference type="RefSeq" id="YP_352507.2">
    <property type="nucleotide sequence ID" value="NC_007493.2"/>
</dbReference>
<dbReference type="SMR" id="Q3J3M8"/>
<dbReference type="STRING" id="272943.RSP_2445"/>
<dbReference type="CAZy" id="GH13">
    <property type="family name" value="Glycoside Hydrolase Family 13"/>
</dbReference>
<dbReference type="EnsemblBacteria" id="ABA78606">
    <property type="protein sequence ID" value="ABA78606"/>
    <property type="gene ID" value="RSP_2445"/>
</dbReference>
<dbReference type="KEGG" id="rsp:RSP_2445"/>
<dbReference type="PATRIC" id="fig|272943.9.peg.1364"/>
<dbReference type="eggNOG" id="COG0366">
    <property type="taxonomic scope" value="Bacteria"/>
</dbReference>
<dbReference type="OrthoDB" id="9805159at2"/>
<dbReference type="Proteomes" id="UP000002703">
    <property type="component" value="Chromosome 1"/>
</dbReference>
<dbReference type="GO" id="GO:0016758">
    <property type="term" value="F:hexosyltransferase activity"/>
    <property type="evidence" value="ECO:0007669"/>
    <property type="project" value="UniProtKB-UniRule"/>
</dbReference>
<dbReference type="GO" id="GO:0004553">
    <property type="term" value="F:hydrolase activity, hydrolyzing O-glycosyl compounds"/>
    <property type="evidence" value="ECO:0007669"/>
    <property type="project" value="InterPro"/>
</dbReference>
<dbReference type="GO" id="GO:0030979">
    <property type="term" value="P:alpha-glucan biosynthetic process"/>
    <property type="evidence" value="ECO:0007669"/>
    <property type="project" value="UniProtKB-UniRule"/>
</dbReference>
<dbReference type="CDD" id="cd11344">
    <property type="entry name" value="AmyAc_GlgE_like"/>
    <property type="match status" value="1"/>
</dbReference>
<dbReference type="Gene3D" id="3.20.20.80">
    <property type="entry name" value="Glycosidases"/>
    <property type="match status" value="1"/>
</dbReference>
<dbReference type="Gene3D" id="2.60.40.1180">
    <property type="entry name" value="Golgi alpha-mannosidase II"/>
    <property type="match status" value="1"/>
</dbReference>
<dbReference type="Gene3D" id="2.60.40.10">
    <property type="entry name" value="Immunoglobulins"/>
    <property type="match status" value="1"/>
</dbReference>
<dbReference type="Gene3D" id="1.20.58.80">
    <property type="entry name" value="Phosphotransferase system, lactose/cellobiose-type IIA subunit"/>
    <property type="match status" value="1"/>
</dbReference>
<dbReference type="HAMAP" id="MF_02124">
    <property type="entry name" value="GlgE"/>
    <property type="match status" value="1"/>
</dbReference>
<dbReference type="InterPro" id="IPR026585">
    <property type="entry name" value="GlgE"/>
</dbReference>
<dbReference type="InterPro" id="IPR049171">
    <property type="entry name" value="GLGE_C"/>
</dbReference>
<dbReference type="InterPro" id="IPR021828">
    <property type="entry name" value="GlgE_dom_N/S"/>
</dbReference>
<dbReference type="InterPro" id="IPR006047">
    <property type="entry name" value="Glyco_hydro_13_cat_dom"/>
</dbReference>
<dbReference type="InterPro" id="IPR013780">
    <property type="entry name" value="Glyco_hydro_b"/>
</dbReference>
<dbReference type="InterPro" id="IPR017853">
    <property type="entry name" value="Glycoside_hydrolase_SF"/>
</dbReference>
<dbReference type="InterPro" id="IPR013783">
    <property type="entry name" value="Ig-like_fold"/>
</dbReference>
<dbReference type="PANTHER" id="PTHR47786">
    <property type="entry name" value="ALPHA-1,4-GLUCAN:MALTOSE-1-PHOSPHATE MALTOSYLTRANSFERASE"/>
    <property type="match status" value="1"/>
</dbReference>
<dbReference type="PANTHER" id="PTHR47786:SF2">
    <property type="entry name" value="GLYCOSYL HYDROLASE FAMILY 13 CATALYTIC DOMAIN-CONTAINING PROTEIN"/>
    <property type="match status" value="1"/>
</dbReference>
<dbReference type="Pfam" id="PF00128">
    <property type="entry name" value="Alpha-amylase"/>
    <property type="match status" value="1"/>
</dbReference>
<dbReference type="Pfam" id="PF21702">
    <property type="entry name" value="GLGE_C"/>
    <property type="match status" value="1"/>
</dbReference>
<dbReference type="Pfam" id="PF11896">
    <property type="entry name" value="GlgE_dom_N_S"/>
    <property type="match status" value="1"/>
</dbReference>
<dbReference type="SMART" id="SM00642">
    <property type="entry name" value="Aamy"/>
    <property type="match status" value="1"/>
</dbReference>
<dbReference type="SUPFAM" id="SSF51445">
    <property type="entry name" value="(Trans)glycosidases"/>
    <property type="match status" value="1"/>
</dbReference>
<comment type="function">
    <text evidence="1">Maltosyltransferase that uses maltose 1-phosphate (M1P) as the sugar donor to elongate linear or branched alpha-(1-&gt;4)-glucans. Is involved in a branched alpha-glucan biosynthetic pathway from trehalose, together with TreS, Mak and GlgB.</text>
</comment>
<comment type="catalytic activity">
    <reaction evidence="1">
        <text>alpha-maltose 1-phosphate + [(1-&gt;4)-alpha-D-glucosyl](n) = [(1-&gt;4)-alpha-D-glucosyl](n+2) + phosphate</text>
        <dbReference type="Rhea" id="RHEA:42692"/>
        <dbReference type="Rhea" id="RHEA-COMP:9584"/>
        <dbReference type="Rhea" id="RHEA-COMP:10183"/>
        <dbReference type="ChEBI" id="CHEBI:15444"/>
        <dbReference type="ChEBI" id="CHEBI:43474"/>
        <dbReference type="ChEBI" id="CHEBI:63576"/>
        <dbReference type="EC" id="2.4.99.16"/>
    </reaction>
</comment>
<comment type="subunit">
    <text evidence="1">Homodimer.</text>
</comment>
<comment type="similarity">
    <text evidence="1">Belongs to the glycosyl hydrolase 13 family. GlgE subfamily.</text>
</comment>
<name>GLGE_CERS4</name>
<accession>Q3J3M8</accession>
<keyword id="KW-0119">Carbohydrate metabolism</keyword>
<keyword id="KW-0328">Glycosyltransferase</keyword>
<keyword id="KW-1185">Reference proteome</keyword>
<keyword id="KW-0808">Transferase</keyword>
<evidence type="ECO:0000255" key="1">
    <source>
        <dbReference type="HAMAP-Rule" id="MF_02124"/>
    </source>
</evidence>
<evidence type="ECO:0000256" key="2">
    <source>
        <dbReference type="SAM" id="MobiDB-lite"/>
    </source>
</evidence>
<sequence>MAAATGAQDRRDGGEEALMRLADARVAIEGVNLEIDGGRFAAKVVAGWEVAVEADIFCDGHDSIDAAVLHRQRGTDDWIEVRMEFLVNDRWQAHVTFAENAFHELTFLAWRDLYTTWRKEVAKKLAAGQKIDLELEEGRRLLQSVETAGAEDRALVDRILGEDGADQEAGARFARMSSPEAVAAMKRCAPRTNLTCYKILPIFADREAAAFSAWYEMMPRSQSDDPERHGTFDDVIRKLPYVRDLGFDVLYFTPIHPIGRVNRKGRNNSLTPAPDDPGSPYAIGSEEGGHDAIHPELGDFESFGRLVEAAHAHGLEIALDFAIQCAPDHPWIREHPEWFDWRPDGTIKFAENPPKKYEDIVNVHFYRGALPELWYALRDVVLFWVEKGVKIFRVDNPHTKPFPFWEWMIGEVQSQHPDVIFLAEAFTRPKVMKRLGKVGYGQSYSYFTWRNTKAELIDYLTELTTEECRHYMRPNFFANTPDINPVYLQHSGRAGFRVRLALAATLGGNYGLYNGYEICEATPVPGKEEYFNSEKYQLRAWDFDQPGHIQDDIRLMNHIRRTHPAMRDFTRLRFYDAHNDSVLAYGKSTEDKQDFLLFHVNLDPHAAQTFEFEVPLWEFGLPDDASVEVEDLLNGNRFTWHGKWQWLELDPQTRPYAVWRLYAPGMPR</sequence>
<gene>
    <name evidence="1" type="primary">glgE</name>
    <name type="ordered locus">RHOS4_10380</name>
    <name type="ORF">RSP_2445</name>
</gene>